<dbReference type="EC" id="2.7.1.92" evidence="1"/>
<dbReference type="EMBL" id="CP001598">
    <property type="protein sequence ID" value="ACQ48015.1"/>
    <property type="molecule type" value="Genomic_DNA"/>
</dbReference>
<dbReference type="RefSeq" id="WP_001068616.1">
    <property type="nucleotide sequence ID" value="NC_012659.1"/>
</dbReference>
<dbReference type="SMR" id="C3PAZ0"/>
<dbReference type="GeneID" id="45022375"/>
<dbReference type="KEGG" id="bai:BAA_2568"/>
<dbReference type="HOGENOM" id="CLU_027634_6_0_9"/>
<dbReference type="UniPathway" id="UPA00076">
    <property type="reaction ID" value="UER00146"/>
</dbReference>
<dbReference type="GO" id="GO:0047590">
    <property type="term" value="F:5-dehydro-2-deoxygluconokinase activity"/>
    <property type="evidence" value="ECO:0007669"/>
    <property type="project" value="UniProtKB-UniRule"/>
</dbReference>
<dbReference type="GO" id="GO:0005524">
    <property type="term" value="F:ATP binding"/>
    <property type="evidence" value="ECO:0007669"/>
    <property type="project" value="UniProtKB-UniRule"/>
</dbReference>
<dbReference type="GO" id="GO:0019310">
    <property type="term" value="P:inositol catabolic process"/>
    <property type="evidence" value="ECO:0007669"/>
    <property type="project" value="UniProtKB-UniRule"/>
</dbReference>
<dbReference type="CDD" id="cd01166">
    <property type="entry name" value="KdgK"/>
    <property type="match status" value="1"/>
</dbReference>
<dbReference type="Gene3D" id="3.40.1190.20">
    <property type="match status" value="1"/>
</dbReference>
<dbReference type="Gene3D" id="2.20.150.10">
    <property type="entry name" value="putative 5-dehydro-2- deoxygluconokinase"/>
    <property type="match status" value="1"/>
</dbReference>
<dbReference type="HAMAP" id="MF_01668">
    <property type="entry name" value="IolC"/>
    <property type="match status" value="1"/>
</dbReference>
<dbReference type="InterPro" id="IPR002173">
    <property type="entry name" value="Carboh/pur_kinase_PfkB_CS"/>
</dbReference>
<dbReference type="InterPro" id="IPR022841">
    <property type="entry name" value="DKG_kinase_firmi"/>
</dbReference>
<dbReference type="InterPro" id="IPR030830">
    <property type="entry name" value="Myo_inos_IolC"/>
</dbReference>
<dbReference type="InterPro" id="IPR023314">
    <property type="entry name" value="Myo_inos_IolC-like_sf"/>
</dbReference>
<dbReference type="InterPro" id="IPR050306">
    <property type="entry name" value="PfkB_Carbo_kinase"/>
</dbReference>
<dbReference type="InterPro" id="IPR011611">
    <property type="entry name" value="PfkB_dom"/>
</dbReference>
<dbReference type="InterPro" id="IPR029056">
    <property type="entry name" value="Ribokinase-like"/>
</dbReference>
<dbReference type="NCBIfam" id="TIGR04382">
    <property type="entry name" value="myo_inos_iolC_N"/>
    <property type="match status" value="1"/>
</dbReference>
<dbReference type="PANTHER" id="PTHR43085:SF49">
    <property type="entry name" value="5-DEHYDRO-2-DEOXYGLUCONOKINASE"/>
    <property type="match status" value="1"/>
</dbReference>
<dbReference type="PANTHER" id="PTHR43085">
    <property type="entry name" value="HEXOKINASE FAMILY MEMBER"/>
    <property type="match status" value="1"/>
</dbReference>
<dbReference type="Pfam" id="PF00294">
    <property type="entry name" value="PfkB"/>
    <property type="match status" value="1"/>
</dbReference>
<dbReference type="SUPFAM" id="SSF53613">
    <property type="entry name" value="Ribokinase-like"/>
    <property type="match status" value="1"/>
</dbReference>
<dbReference type="PROSITE" id="PS00584">
    <property type="entry name" value="PFKB_KINASES_2"/>
    <property type="match status" value="1"/>
</dbReference>
<comment type="function">
    <text evidence="1">Catalyzes the phosphorylation of 5-dehydro-2-deoxy-D-gluconate (2-deoxy-5-keto-D-gluconate or DKG) to 6-phospho-5-dehydro-2-deoxy-D-gluconate (DKGP).</text>
</comment>
<comment type="catalytic activity">
    <reaction evidence="1">
        <text>5-dehydro-2-deoxy-D-gluconate + ATP = 6-phospho-5-dehydro-2-deoxy-D-gluconate + ADP + H(+)</text>
        <dbReference type="Rhea" id="RHEA:13497"/>
        <dbReference type="ChEBI" id="CHEBI:15378"/>
        <dbReference type="ChEBI" id="CHEBI:16669"/>
        <dbReference type="ChEBI" id="CHEBI:30616"/>
        <dbReference type="ChEBI" id="CHEBI:57949"/>
        <dbReference type="ChEBI" id="CHEBI:456216"/>
        <dbReference type="EC" id="2.7.1.92"/>
    </reaction>
</comment>
<comment type="pathway">
    <text evidence="1">Polyol metabolism; myo-inositol degradation into acetyl-CoA; acetyl-CoA from myo-inositol: step 5/7.</text>
</comment>
<comment type="similarity">
    <text evidence="1">Belongs to the carbohydrate kinase PfkB family.</text>
</comment>
<name>IOLC_BACAA</name>
<proteinExistence type="inferred from homology"/>
<reference key="1">
    <citation type="submission" date="2009-04" db="EMBL/GenBank/DDBJ databases">
        <title>Genome sequence of Bacillus anthracis A0248.</title>
        <authorList>
            <person name="Dodson R.J."/>
            <person name="Munk A.C."/>
            <person name="Bruce D."/>
            <person name="Detter C."/>
            <person name="Tapia R."/>
            <person name="Sutton G."/>
            <person name="Sims D."/>
            <person name="Brettin T."/>
        </authorList>
    </citation>
    <scope>NUCLEOTIDE SEQUENCE [LARGE SCALE GENOMIC DNA]</scope>
    <source>
        <strain>A0248</strain>
    </source>
</reference>
<evidence type="ECO:0000255" key="1">
    <source>
        <dbReference type="HAMAP-Rule" id="MF_01668"/>
    </source>
</evidence>
<feature type="chain" id="PRO_1000187303" description="5-dehydro-2-deoxygluconokinase">
    <location>
        <begin position="1"/>
        <end position="332"/>
    </location>
</feature>
<sequence length="332" mass="36663">MNPLIFKENRPFDLIAVGRLCVDLNANETQRPMEETRTFTKYVGGSPANIAIGAARLGLQTGFIGKVSDDQMGRFITGYLKDNKINTDQIPIDCTGAVTGLAFTEIKSPEDCSILMYRDNVADLNLDPTEVSEDYIKQSKALLISGTALAKSPSREAVFLALEYARKHDVVVFFDVDYRPYTWQSEAETAVYYNLAAEKSDVIIGTREEFDMMEKLLNYEKSNDQVTAERWFSHHAKIVVIKHGGDGSIAYTRDGQSHRGGIFKTKVLKTFGAGDSYASAFIYGLMQGLEIPQAMRLGGASASIVISKHSCSDAMPTRAEISAFMETAEELV</sequence>
<keyword id="KW-0067">ATP-binding</keyword>
<keyword id="KW-0418">Kinase</keyword>
<keyword id="KW-0547">Nucleotide-binding</keyword>
<keyword id="KW-0808">Transferase</keyword>
<gene>
    <name evidence="1" type="primary">iolC</name>
    <name type="ordered locus">BAA_2568</name>
</gene>
<organism>
    <name type="scientific">Bacillus anthracis (strain A0248)</name>
    <dbReference type="NCBI Taxonomy" id="592021"/>
    <lineage>
        <taxon>Bacteria</taxon>
        <taxon>Bacillati</taxon>
        <taxon>Bacillota</taxon>
        <taxon>Bacilli</taxon>
        <taxon>Bacillales</taxon>
        <taxon>Bacillaceae</taxon>
        <taxon>Bacillus</taxon>
        <taxon>Bacillus cereus group</taxon>
    </lineage>
</organism>
<accession>C3PAZ0</accession>
<protein>
    <recommendedName>
        <fullName evidence="1">5-dehydro-2-deoxygluconokinase</fullName>
        <ecNumber evidence="1">2.7.1.92</ecNumber>
    </recommendedName>
    <alternativeName>
        <fullName evidence="1">2-deoxy-5-keto-D-gluconate kinase</fullName>
        <shortName evidence="1">DKG kinase</shortName>
    </alternativeName>
</protein>